<evidence type="ECO:0000250" key="1"/>
<evidence type="ECO:0000269" key="2">
    <source>
    </source>
</evidence>
<evidence type="ECO:0000269" key="3">
    <source>
    </source>
</evidence>
<evidence type="ECO:0000303" key="4">
    <source>
    </source>
</evidence>
<evidence type="ECO:0000305" key="5"/>
<evidence type="ECO:0000305" key="6">
    <source>
    </source>
</evidence>
<evidence type="ECO:0007744" key="7">
    <source>
    </source>
</evidence>
<keyword id="KW-0007">Acetylation</keyword>
<keyword id="KW-0025">Alternative splicing</keyword>
<keyword id="KW-1003">Cell membrane</keyword>
<keyword id="KW-0443">Lipid metabolism</keyword>
<keyword id="KW-0449">Lipoprotein</keyword>
<keyword id="KW-0472">Membrane</keyword>
<keyword id="KW-0488">Methylation</keyword>
<keyword id="KW-0520">NAD</keyword>
<keyword id="KW-0560">Oxidoreductase</keyword>
<keyword id="KW-0564">Palmitate</keyword>
<keyword id="KW-0636">Prenylation</keyword>
<keyword id="KW-1267">Proteomics identification</keyword>
<keyword id="KW-1185">Reference proteome</keyword>
<comment type="function">
    <text evidence="2 3">Oxidizes medium and long chain saturated and unsaturated fatty aldehydes generated in the plasma membrane into non-toxic fatty acids (PubMed:17382292, PubMed:23721920). May have a protective role against the cytotoxicity induced by lipid peroxidation (PubMed:17382292). Short-chain fatty aldehydes are not good substrates (PubMed:17382292). Can use both NADP(+) and NAD(+) as electron acceptor in vitro, however in vivo preference will depend on their tissue levels (PubMed:17382292). Low activity towards acetaldehyde and 3,4-dihydroxyphenylacetaldehyde (PubMed:17382292, PubMed:23721920). Able to metabolize aromatic aldehydes such as benzaldehyde to their acid form (PubMed:17382292).</text>
</comment>
<comment type="catalytic activity">
    <reaction evidence="2">
        <text>an aldehyde + NADP(+) + H2O = a carboxylate + NADPH + 2 H(+)</text>
        <dbReference type="Rhea" id="RHEA:11888"/>
        <dbReference type="ChEBI" id="CHEBI:15377"/>
        <dbReference type="ChEBI" id="CHEBI:15378"/>
        <dbReference type="ChEBI" id="CHEBI:17478"/>
        <dbReference type="ChEBI" id="CHEBI:29067"/>
        <dbReference type="ChEBI" id="CHEBI:57783"/>
        <dbReference type="ChEBI" id="CHEBI:58349"/>
        <dbReference type="EC" id="1.2.1.5"/>
    </reaction>
    <physiologicalReaction direction="left-to-right" evidence="6">
        <dbReference type="Rhea" id="RHEA:11889"/>
    </physiologicalReaction>
</comment>
<comment type="catalytic activity">
    <reaction evidence="2 3">
        <text>an aldehyde + NAD(+) + H2O = a carboxylate + NADH + 2 H(+)</text>
        <dbReference type="Rhea" id="RHEA:16185"/>
        <dbReference type="ChEBI" id="CHEBI:15377"/>
        <dbReference type="ChEBI" id="CHEBI:15378"/>
        <dbReference type="ChEBI" id="CHEBI:17478"/>
        <dbReference type="ChEBI" id="CHEBI:29067"/>
        <dbReference type="ChEBI" id="CHEBI:57540"/>
        <dbReference type="ChEBI" id="CHEBI:57945"/>
        <dbReference type="EC" id="1.2.1.5"/>
    </reaction>
    <physiologicalReaction direction="left-to-right" evidence="3 6">
        <dbReference type="Rhea" id="RHEA:16186"/>
    </physiologicalReaction>
</comment>
<comment type="catalytic activity">
    <reaction evidence="3">
        <text>a long-chain fatty aldehyde + NAD(+) + H2O = a long-chain fatty acid + NADH + 2 H(+)</text>
        <dbReference type="Rhea" id="RHEA:10652"/>
        <dbReference type="ChEBI" id="CHEBI:15377"/>
        <dbReference type="ChEBI" id="CHEBI:15378"/>
        <dbReference type="ChEBI" id="CHEBI:17176"/>
        <dbReference type="ChEBI" id="CHEBI:57540"/>
        <dbReference type="ChEBI" id="CHEBI:57560"/>
        <dbReference type="ChEBI" id="CHEBI:57945"/>
        <dbReference type="EC" id="1.2.1.48"/>
    </reaction>
    <physiologicalReaction direction="left-to-right" evidence="3">
        <dbReference type="Rhea" id="RHEA:10653"/>
    </physiologicalReaction>
</comment>
<comment type="catalytic activity">
    <reaction evidence="2 3">
        <text>a medium-chain fatty aldehyde + NAD(+) + H2O = a medium-chain fatty acid + NADH + 2 H(+)</text>
        <dbReference type="Rhea" id="RHEA:69763"/>
        <dbReference type="ChEBI" id="CHEBI:15377"/>
        <dbReference type="ChEBI" id="CHEBI:15378"/>
        <dbReference type="ChEBI" id="CHEBI:57540"/>
        <dbReference type="ChEBI" id="CHEBI:57945"/>
        <dbReference type="ChEBI" id="CHEBI:59558"/>
        <dbReference type="ChEBI" id="CHEBI:142621"/>
    </reaction>
    <physiologicalReaction direction="left-to-right" evidence="3 6">
        <dbReference type="Rhea" id="RHEA:69764"/>
    </physiologicalReaction>
</comment>
<comment type="catalytic activity">
    <reaction evidence="2 3">
        <text>octanal + NAD(+) + H2O = octanoate + NADH + 2 H(+)</text>
        <dbReference type="Rhea" id="RHEA:44100"/>
        <dbReference type="ChEBI" id="CHEBI:15377"/>
        <dbReference type="ChEBI" id="CHEBI:15378"/>
        <dbReference type="ChEBI" id="CHEBI:17935"/>
        <dbReference type="ChEBI" id="CHEBI:25646"/>
        <dbReference type="ChEBI" id="CHEBI:57540"/>
        <dbReference type="ChEBI" id="CHEBI:57945"/>
    </reaction>
    <physiologicalReaction direction="left-to-right" evidence="3 6">
        <dbReference type="Rhea" id="RHEA:44101"/>
    </physiologicalReaction>
</comment>
<comment type="catalytic activity">
    <reaction evidence="2">
        <text>nonanal + NAD(+) + H2O = nonanoate + NADH + 2 H(+)</text>
        <dbReference type="Rhea" id="RHEA:69759"/>
        <dbReference type="ChEBI" id="CHEBI:15377"/>
        <dbReference type="ChEBI" id="CHEBI:15378"/>
        <dbReference type="ChEBI" id="CHEBI:32361"/>
        <dbReference type="ChEBI" id="CHEBI:57540"/>
        <dbReference type="ChEBI" id="CHEBI:57945"/>
        <dbReference type="ChEBI" id="CHEBI:84268"/>
    </reaction>
    <physiologicalReaction direction="left-to-right" evidence="6">
        <dbReference type="Rhea" id="RHEA:69760"/>
    </physiologicalReaction>
</comment>
<comment type="catalytic activity">
    <reaction evidence="3">
        <text>hexadecanoate + NADH + 2 H(+) = hexadecanal + NAD(+) + H2O</text>
        <dbReference type="Rhea" id="RHEA:33739"/>
        <dbReference type="ChEBI" id="CHEBI:7896"/>
        <dbReference type="ChEBI" id="CHEBI:15377"/>
        <dbReference type="ChEBI" id="CHEBI:15378"/>
        <dbReference type="ChEBI" id="CHEBI:17600"/>
        <dbReference type="ChEBI" id="CHEBI:57540"/>
        <dbReference type="ChEBI" id="CHEBI:57945"/>
    </reaction>
    <physiologicalReaction direction="right-to-left" evidence="3">
        <dbReference type="Rhea" id="RHEA:33741"/>
    </physiologicalReaction>
</comment>
<comment type="catalytic activity">
    <reaction evidence="2">
        <text>(2E)-octenal + NAD(+) + H2O = (2E)-octenoate + NADH + 2 H(+)</text>
        <dbReference type="Rhea" id="RHEA:59920"/>
        <dbReference type="ChEBI" id="CHEBI:15377"/>
        <dbReference type="ChEBI" id="CHEBI:15378"/>
        <dbReference type="ChEBI" id="CHEBI:57540"/>
        <dbReference type="ChEBI" id="CHEBI:57945"/>
        <dbReference type="ChEBI" id="CHEBI:61748"/>
        <dbReference type="ChEBI" id="CHEBI:143526"/>
    </reaction>
    <physiologicalReaction direction="left-to-right" evidence="6">
        <dbReference type="Rhea" id="RHEA:59921"/>
    </physiologicalReaction>
</comment>
<comment type="catalytic activity">
    <reaction evidence="2">
        <text>(E)-non-2-enal + NAD(+) + H2O = (E)-non-2-enoate + NADH + 2 H(+)</text>
        <dbReference type="Rhea" id="RHEA:69767"/>
        <dbReference type="ChEBI" id="CHEBI:15377"/>
        <dbReference type="ChEBI" id="CHEBI:15378"/>
        <dbReference type="ChEBI" id="CHEBI:57540"/>
        <dbReference type="ChEBI" id="CHEBI:57945"/>
        <dbReference type="ChEBI" id="CHEBI:142592"/>
        <dbReference type="ChEBI" id="CHEBI:143908"/>
    </reaction>
    <physiologicalReaction direction="left-to-right" evidence="6">
        <dbReference type="Rhea" id="RHEA:69768"/>
    </physiologicalReaction>
</comment>
<comment type="catalytic activity">
    <reaction evidence="2">
        <text>(E)-4-hydroxynon-2-enal + NAD(+) + H2O = (E)-4-hydroxynon-2-enoate + NADH + 2 H(+)</text>
        <dbReference type="Rhea" id="RHEA:67248"/>
        <dbReference type="ChEBI" id="CHEBI:15377"/>
        <dbReference type="ChEBI" id="CHEBI:15378"/>
        <dbReference type="ChEBI" id="CHEBI:57540"/>
        <dbReference type="ChEBI" id="CHEBI:57945"/>
        <dbReference type="ChEBI" id="CHEBI:58968"/>
        <dbReference type="ChEBI" id="CHEBI:142920"/>
    </reaction>
    <physiologicalReaction direction="left-to-right" evidence="6">
        <dbReference type="Rhea" id="RHEA:67249"/>
    </physiologicalReaction>
</comment>
<comment type="catalytic activity">
    <reaction evidence="3">
        <text>(2E)-hexadecenal + NAD(+) + H2O = (E)-hexadec-2-enoate + NADH + 2 H(+)</text>
        <dbReference type="Rhea" id="RHEA:36135"/>
        <dbReference type="ChEBI" id="CHEBI:15377"/>
        <dbReference type="ChEBI" id="CHEBI:15378"/>
        <dbReference type="ChEBI" id="CHEBI:17585"/>
        <dbReference type="ChEBI" id="CHEBI:57540"/>
        <dbReference type="ChEBI" id="CHEBI:57945"/>
        <dbReference type="ChEBI" id="CHEBI:72745"/>
    </reaction>
    <physiologicalReaction direction="left-to-right" evidence="3">
        <dbReference type="Rhea" id="RHEA:36136"/>
    </physiologicalReaction>
</comment>
<comment type="catalytic activity">
    <reaction evidence="2">
        <text>benzaldehyde + NAD(+) + H2O = benzoate + NADH + 2 H(+)</text>
        <dbReference type="Rhea" id="RHEA:11840"/>
        <dbReference type="ChEBI" id="CHEBI:15377"/>
        <dbReference type="ChEBI" id="CHEBI:15378"/>
        <dbReference type="ChEBI" id="CHEBI:16150"/>
        <dbReference type="ChEBI" id="CHEBI:17169"/>
        <dbReference type="ChEBI" id="CHEBI:57540"/>
        <dbReference type="ChEBI" id="CHEBI:57945"/>
        <dbReference type="EC" id="1.2.1.28"/>
    </reaction>
    <physiologicalReaction direction="left-to-right" evidence="6">
        <dbReference type="Rhea" id="RHEA:11841"/>
    </physiologicalReaction>
</comment>
<comment type="catalytic activity">
    <reaction evidence="2">
        <text>a medium-chain fatty aldehyde + NADP(+) + H2O = a medium-chain fatty acid + NADPH + 2 H(+)</text>
        <dbReference type="Rhea" id="RHEA:80815"/>
        <dbReference type="ChEBI" id="CHEBI:15377"/>
        <dbReference type="ChEBI" id="CHEBI:15378"/>
        <dbReference type="ChEBI" id="CHEBI:57783"/>
        <dbReference type="ChEBI" id="CHEBI:58349"/>
        <dbReference type="ChEBI" id="CHEBI:59558"/>
        <dbReference type="ChEBI" id="CHEBI:142621"/>
    </reaction>
    <physiologicalReaction direction="left-to-right" evidence="6">
        <dbReference type="Rhea" id="RHEA:80816"/>
    </physiologicalReaction>
</comment>
<comment type="catalytic activity">
    <reaction evidence="2">
        <text>hexanal + NADP(+) + H2O = hexanoate + NADPH + 2 H(+)</text>
        <dbReference type="Rhea" id="RHEA:59908"/>
        <dbReference type="ChEBI" id="CHEBI:15377"/>
        <dbReference type="ChEBI" id="CHEBI:15378"/>
        <dbReference type="ChEBI" id="CHEBI:17120"/>
        <dbReference type="ChEBI" id="CHEBI:57783"/>
        <dbReference type="ChEBI" id="CHEBI:58349"/>
        <dbReference type="ChEBI" id="CHEBI:88528"/>
    </reaction>
    <physiologicalReaction direction="left-to-right" evidence="6">
        <dbReference type="Rhea" id="RHEA:59909"/>
    </physiologicalReaction>
</comment>
<comment type="catalytic activity">
    <reaction evidence="2">
        <text>octanal + NADP(+) + H2O = octanoate + NADPH + 2 H(+)</text>
        <dbReference type="Rhea" id="RHEA:59904"/>
        <dbReference type="ChEBI" id="CHEBI:15377"/>
        <dbReference type="ChEBI" id="CHEBI:15378"/>
        <dbReference type="ChEBI" id="CHEBI:17935"/>
        <dbReference type="ChEBI" id="CHEBI:25646"/>
        <dbReference type="ChEBI" id="CHEBI:57783"/>
        <dbReference type="ChEBI" id="CHEBI:58349"/>
    </reaction>
    <physiologicalReaction direction="left-to-right" evidence="6">
        <dbReference type="Rhea" id="RHEA:59905"/>
    </physiologicalReaction>
</comment>
<comment type="catalytic activity">
    <reaction evidence="2">
        <text>nonanal + NADP(+) + H2O = nonanoate + NADPH + 2 H(+)</text>
        <dbReference type="Rhea" id="RHEA:80819"/>
        <dbReference type="ChEBI" id="CHEBI:15377"/>
        <dbReference type="ChEBI" id="CHEBI:15378"/>
        <dbReference type="ChEBI" id="CHEBI:32361"/>
        <dbReference type="ChEBI" id="CHEBI:57783"/>
        <dbReference type="ChEBI" id="CHEBI:58349"/>
        <dbReference type="ChEBI" id="CHEBI:84268"/>
    </reaction>
    <physiologicalReaction direction="left-to-right" evidence="6">
        <dbReference type="Rhea" id="RHEA:80820"/>
    </physiologicalReaction>
</comment>
<comment type="catalytic activity">
    <reaction evidence="2">
        <text>(2E)-octenal + NADP(+) + H2O = (2E)-octenoate + NADPH + 2 H(+)</text>
        <dbReference type="Rhea" id="RHEA:59916"/>
        <dbReference type="ChEBI" id="CHEBI:15377"/>
        <dbReference type="ChEBI" id="CHEBI:15378"/>
        <dbReference type="ChEBI" id="CHEBI:57783"/>
        <dbReference type="ChEBI" id="CHEBI:58349"/>
        <dbReference type="ChEBI" id="CHEBI:61748"/>
        <dbReference type="ChEBI" id="CHEBI:143526"/>
    </reaction>
    <physiologicalReaction direction="left-to-right" evidence="6">
        <dbReference type="Rhea" id="RHEA:59917"/>
    </physiologicalReaction>
</comment>
<comment type="catalytic activity">
    <reaction evidence="2">
        <text>(E)-non-2-enal + NADP(+) + H2O = (E)-non-2-enoate + NADPH + 2 H(+)</text>
        <dbReference type="Rhea" id="RHEA:60692"/>
        <dbReference type="ChEBI" id="CHEBI:15377"/>
        <dbReference type="ChEBI" id="CHEBI:15378"/>
        <dbReference type="ChEBI" id="CHEBI:57783"/>
        <dbReference type="ChEBI" id="CHEBI:58349"/>
        <dbReference type="ChEBI" id="CHEBI:142592"/>
        <dbReference type="ChEBI" id="CHEBI:143908"/>
    </reaction>
    <physiologicalReaction direction="left-to-right" evidence="6">
        <dbReference type="Rhea" id="RHEA:60693"/>
    </physiologicalReaction>
</comment>
<comment type="catalytic activity">
    <reaction evidence="2">
        <text>(E)-4-hydroxynon-2-enal + NADP(+) + H2O = (E)-4-hydroxynon-2-enoate + NADPH + 2 H(+)</text>
        <dbReference type="Rhea" id="RHEA:59912"/>
        <dbReference type="ChEBI" id="CHEBI:15377"/>
        <dbReference type="ChEBI" id="CHEBI:15378"/>
        <dbReference type="ChEBI" id="CHEBI:57783"/>
        <dbReference type="ChEBI" id="CHEBI:58349"/>
        <dbReference type="ChEBI" id="CHEBI:58968"/>
        <dbReference type="ChEBI" id="CHEBI:142920"/>
    </reaction>
    <physiologicalReaction direction="left-to-right" evidence="6">
        <dbReference type="Rhea" id="RHEA:59913"/>
    </physiologicalReaction>
</comment>
<comment type="catalytic activity">
    <reaction evidence="2">
        <text>benzaldehyde + NADP(+) + H2O = benzoate + NADPH + 2 H(+)</text>
        <dbReference type="Rhea" id="RHEA:21660"/>
        <dbReference type="ChEBI" id="CHEBI:15377"/>
        <dbReference type="ChEBI" id="CHEBI:15378"/>
        <dbReference type="ChEBI" id="CHEBI:16150"/>
        <dbReference type="ChEBI" id="CHEBI:17169"/>
        <dbReference type="ChEBI" id="CHEBI:57783"/>
        <dbReference type="ChEBI" id="CHEBI:58349"/>
        <dbReference type="EC" id="1.2.1.7"/>
    </reaction>
    <physiologicalReaction direction="left-to-right" evidence="6">
        <dbReference type="Rhea" id="RHEA:21661"/>
    </physiologicalReaction>
</comment>
<comment type="biophysicochemical properties">
    <kinetics>
        <KM evidence="3">25 uM for octanal</KM>
        <KM evidence="3">45.6 uM for hexadecanal</KM>
        <KM evidence="3">4.9 uM for trans-2-hexadecenal</KM>
        <Vmax evidence="3">4.8 pmol/min/ng enzyme with trans-2-hexadecenal</Vmax>
        <Vmax evidence="3">5.0 pmol/min/ng enzyme with octanal</Vmax>
        <Vmax evidence="3">9.7 pmol/min/ng enzyme with hexadecanal</Vmax>
    </kinetics>
</comment>
<comment type="pathway">
    <text>Alcohol metabolism; ethanol degradation; acetate from ethanol: step 2/2.</text>
</comment>
<comment type="interaction">
    <interactant intactId="EBI-2558314">
        <id>P43353</id>
    </interactant>
    <interactant intactId="EBI-21868861">
        <id>P48448</id>
        <label>ALDH3B2</label>
    </interactant>
    <organismsDiffer>false</organismsDiffer>
    <experiments>3</experiments>
</comment>
<comment type="interaction">
    <interactant intactId="EBI-2558314">
        <id>P43353</id>
    </interactant>
    <interactant intactId="EBI-3867333">
        <id>A8MQ03</id>
        <label>CYSRT1</label>
    </interactant>
    <organismsDiffer>false</organismsDiffer>
    <experiments>3</experiments>
</comment>
<comment type="interaction">
    <interactant intactId="EBI-2558314">
        <id>P43353</id>
    </interactant>
    <interactant intactId="EBI-948001">
        <id>Q15323</id>
        <label>KRT31</label>
    </interactant>
    <organismsDiffer>false</organismsDiffer>
    <experiments>3</experiments>
</comment>
<comment type="interaction">
    <interactant intactId="EBI-2558314">
        <id>P43353</id>
    </interactant>
    <interactant intactId="EBI-1047093">
        <id>O76011</id>
        <label>KRT34</label>
    </interactant>
    <organismsDiffer>false</organismsDiffer>
    <experiments>3</experiments>
</comment>
<comment type="interaction">
    <interactant intactId="EBI-2558314">
        <id>P43353</id>
    </interactant>
    <interactant intactId="EBI-10171697">
        <id>Q6A162</id>
        <label>KRT40</label>
    </interactant>
    <organismsDiffer>false</organismsDiffer>
    <experiments>3</experiments>
</comment>
<comment type="interaction">
    <interactant intactId="EBI-2558314">
        <id>P43353</id>
    </interactant>
    <interactant intactId="EBI-11959885">
        <id>Q07627</id>
        <label>KRTAP1-1</label>
    </interactant>
    <organismsDiffer>false</organismsDiffer>
    <experiments>3</experiments>
</comment>
<comment type="interaction">
    <interactant intactId="EBI-2558314">
        <id>P43353</id>
    </interactant>
    <interactant intactId="EBI-11749135">
        <id>Q8IUG1</id>
        <label>KRTAP1-3</label>
    </interactant>
    <organismsDiffer>false</organismsDiffer>
    <experiments>3</experiments>
</comment>
<comment type="interaction">
    <interactant intactId="EBI-2558314">
        <id>P43353</id>
    </interactant>
    <interactant intactId="EBI-10172150">
        <id>P60370</id>
        <label>KRTAP10-5</label>
    </interactant>
    <organismsDiffer>false</organismsDiffer>
    <experiments>3</experiments>
</comment>
<comment type="interaction">
    <interactant intactId="EBI-2558314">
        <id>P43353</id>
    </interactant>
    <interactant intactId="EBI-10172290">
        <id>P60409</id>
        <label>KRTAP10-7</label>
    </interactant>
    <organismsDiffer>false</organismsDiffer>
    <experiments>3</experiments>
</comment>
<comment type="interaction">
    <interactant intactId="EBI-2558314">
        <id>P43353</id>
    </interactant>
    <interactant intactId="EBI-10171774">
        <id>P60410</id>
        <label>KRTAP10-8</label>
    </interactant>
    <organismsDiffer>false</organismsDiffer>
    <experiments>6</experiments>
</comment>
<comment type="interaction">
    <interactant intactId="EBI-2558314">
        <id>P43353</id>
    </interactant>
    <interactant intactId="EBI-10172052">
        <id>P60411</id>
        <label>KRTAP10-9</label>
    </interactant>
    <organismsDiffer>false</organismsDiffer>
    <experiments>3</experiments>
</comment>
<comment type="interaction">
    <interactant intactId="EBI-2558314">
        <id>P43353</id>
    </interactant>
    <interactant intactId="EBI-11953334">
        <id>P60328</id>
        <label>KRTAP12-3</label>
    </interactant>
    <organismsDiffer>false</organismsDiffer>
    <experiments>3</experiments>
</comment>
<comment type="interaction">
    <interactant intactId="EBI-2558314">
        <id>P43353</id>
    </interactant>
    <interactant intactId="EBI-3957694">
        <id>Q9BYR6</id>
        <label>KRTAP3-3</label>
    </interactant>
    <organismsDiffer>false</organismsDiffer>
    <experiments>3</experiments>
</comment>
<comment type="interaction">
    <interactant intactId="EBI-2558314">
        <id>P43353</id>
    </interactant>
    <interactant intactId="EBI-3958099">
        <id>P26371</id>
        <label>KRTAP5-9</label>
    </interactant>
    <organismsDiffer>false</organismsDiffer>
    <experiments>3</experiments>
</comment>
<comment type="interaction">
    <interactant intactId="EBI-2558314">
        <id>P43353</id>
    </interactant>
    <interactant intactId="EBI-10172526">
        <id>Q9UJV3-2</id>
        <label>MID2</label>
    </interactant>
    <organismsDiffer>false</organismsDiffer>
    <experiments>3</experiments>
</comment>
<comment type="interaction">
    <interactant intactId="EBI-2558314">
        <id>P43353</id>
    </interactant>
    <interactant intactId="EBI-945833">
        <id>Q7Z3S9</id>
        <label>NOTCH2NLA</label>
    </interactant>
    <organismsDiffer>false</organismsDiffer>
    <experiments>3</experiments>
</comment>
<comment type="subcellular location">
    <subcellularLocation>
        <location evidence="3">Cell membrane</location>
        <topology evidence="3">Lipid-anchor</topology>
    </subcellularLocation>
    <text>Primarily in the plasma membrane as well as in some punctate structures in the cytoplasm.</text>
</comment>
<comment type="alternative products">
    <event type="alternative splicing"/>
    <isoform>
        <id>P43353-1</id>
        <name>1</name>
        <sequence type="displayed"/>
    </isoform>
    <isoform>
        <id>P43353-2</id>
        <name>2</name>
        <sequence type="described" ref="VSP_014040"/>
    </isoform>
</comment>
<comment type="tissue specificity">
    <text>Highest expression in kidney and lung.</text>
</comment>
<comment type="PTM">
    <text evidence="3">Dually lipidated in the C-terminus; prenylation occurs prior to, and is a prerequisite for palmitoylation. It is also required for activity towards long-chain substrates.</text>
</comment>
<comment type="similarity">
    <text evidence="5">Belongs to the aldehyde dehydrogenase family.</text>
</comment>
<reference key="1">
    <citation type="journal article" date="1994" name="Gene">
        <title>Cloning of a cDNA encoding human ALDH7, a new member of the aldehyde dehydrogenase family.</title>
        <authorList>
            <person name="Hsu L.C."/>
            <person name="Chang W.-C."/>
            <person name="Yoshida A."/>
        </authorList>
    </citation>
    <scope>NUCLEOTIDE SEQUENCE [MRNA] (ISOFORM 1)</scope>
    <source>
        <tissue>Kidney</tissue>
    </source>
</reference>
<reference key="2">
    <citation type="journal article" date="2007" name="Biochem. Biophys. Res. Commun.">
        <title>Expression and initial characterization of human ALDH3B1.</title>
        <authorList>
            <person name="Marchitti S.A."/>
            <person name="Orlicky D.J."/>
            <person name="Vasiliou V."/>
        </authorList>
    </citation>
    <scope>NUCLEOTIDE SEQUENCE [MRNA] (ISOFORM 1)</scope>
    <scope>FUNCTION</scope>
    <scope>CATALYTIC ACTIVITY</scope>
    <scope>SUBSTRATE SPECIFICITY</scope>
</reference>
<reference key="3">
    <citation type="submission" date="2003-08" db="EMBL/GenBank/DDBJ databases">
        <title>Cloning of human full-length CDSs in BD Creator(TM) system donor vector.</title>
        <authorList>
            <person name="Kalnine N."/>
            <person name="Chen X."/>
            <person name="Rolfs A."/>
            <person name="Halleck A."/>
            <person name="Hines L."/>
            <person name="Eisenstein S."/>
            <person name="Koundinya M."/>
            <person name="Raphael J."/>
            <person name="Moreira D."/>
            <person name="Kelley T."/>
            <person name="LaBaer J."/>
            <person name="Lin Y."/>
            <person name="Phelan M."/>
            <person name="Farmer A."/>
        </authorList>
    </citation>
    <scope>NUCLEOTIDE SEQUENCE [LARGE SCALE MRNA] (ISOFORM 1)</scope>
</reference>
<reference key="4">
    <citation type="journal article" date="2004" name="Nat. Genet.">
        <title>Complete sequencing and characterization of 21,243 full-length human cDNAs.</title>
        <authorList>
            <person name="Ota T."/>
            <person name="Suzuki Y."/>
            <person name="Nishikawa T."/>
            <person name="Otsuki T."/>
            <person name="Sugiyama T."/>
            <person name="Irie R."/>
            <person name="Wakamatsu A."/>
            <person name="Hayashi K."/>
            <person name="Sato H."/>
            <person name="Nagai K."/>
            <person name="Kimura K."/>
            <person name="Makita H."/>
            <person name="Sekine M."/>
            <person name="Obayashi M."/>
            <person name="Nishi T."/>
            <person name="Shibahara T."/>
            <person name="Tanaka T."/>
            <person name="Ishii S."/>
            <person name="Yamamoto J."/>
            <person name="Saito K."/>
            <person name="Kawai Y."/>
            <person name="Isono Y."/>
            <person name="Nakamura Y."/>
            <person name="Nagahari K."/>
            <person name="Murakami K."/>
            <person name="Yasuda T."/>
            <person name="Iwayanagi T."/>
            <person name="Wagatsuma M."/>
            <person name="Shiratori A."/>
            <person name="Sudo H."/>
            <person name="Hosoiri T."/>
            <person name="Kaku Y."/>
            <person name="Kodaira H."/>
            <person name="Kondo H."/>
            <person name="Sugawara M."/>
            <person name="Takahashi M."/>
            <person name="Kanda K."/>
            <person name="Yokoi T."/>
            <person name="Furuya T."/>
            <person name="Kikkawa E."/>
            <person name="Omura Y."/>
            <person name="Abe K."/>
            <person name="Kamihara K."/>
            <person name="Katsuta N."/>
            <person name="Sato K."/>
            <person name="Tanikawa M."/>
            <person name="Yamazaki M."/>
            <person name="Ninomiya K."/>
            <person name="Ishibashi T."/>
            <person name="Yamashita H."/>
            <person name="Murakawa K."/>
            <person name="Fujimori K."/>
            <person name="Tanai H."/>
            <person name="Kimata M."/>
            <person name="Watanabe M."/>
            <person name="Hiraoka S."/>
            <person name="Chiba Y."/>
            <person name="Ishida S."/>
            <person name="Ono Y."/>
            <person name="Takiguchi S."/>
            <person name="Watanabe S."/>
            <person name="Yosida M."/>
            <person name="Hotuta T."/>
            <person name="Kusano J."/>
            <person name="Kanehori K."/>
            <person name="Takahashi-Fujii A."/>
            <person name="Hara H."/>
            <person name="Tanase T.-O."/>
            <person name="Nomura Y."/>
            <person name="Togiya S."/>
            <person name="Komai F."/>
            <person name="Hara R."/>
            <person name="Takeuchi K."/>
            <person name="Arita M."/>
            <person name="Imose N."/>
            <person name="Musashino K."/>
            <person name="Yuuki H."/>
            <person name="Oshima A."/>
            <person name="Sasaki N."/>
            <person name="Aotsuka S."/>
            <person name="Yoshikawa Y."/>
            <person name="Matsunawa H."/>
            <person name="Ichihara T."/>
            <person name="Shiohata N."/>
            <person name="Sano S."/>
            <person name="Moriya S."/>
            <person name="Momiyama H."/>
            <person name="Satoh N."/>
            <person name="Takami S."/>
            <person name="Terashima Y."/>
            <person name="Suzuki O."/>
            <person name="Nakagawa S."/>
            <person name="Senoh A."/>
            <person name="Mizoguchi H."/>
            <person name="Goto Y."/>
            <person name="Shimizu F."/>
            <person name="Wakebe H."/>
            <person name="Hishigaki H."/>
            <person name="Watanabe T."/>
            <person name="Sugiyama A."/>
            <person name="Takemoto M."/>
            <person name="Kawakami B."/>
            <person name="Yamazaki M."/>
            <person name="Watanabe K."/>
            <person name="Kumagai A."/>
            <person name="Itakura S."/>
            <person name="Fukuzumi Y."/>
            <person name="Fujimori Y."/>
            <person name="Komiyama M."/>
            <person name="Tashiro H."/>
            <person name="Tanigami A."/>
            <person name="Fujiwara T."/>
            <person name="Ono T."/>
            <person name="Yamada K."/>
            <person name="Fujii Y."/>
            <person name="Ozaki K."/>
            <person name="Hirao M."/>
            <person name="Ohmori Y."/>
            <person name="Kawabata A."/>
            <person name="Hikiji T."/>
            <person name="Kobatake N."/>
            <person name="Inagaki H."/>
            <person name="Ikema Y."/>
            <person name="Okamoto S."/>
            <person name="Okitani R."/>
            <person name="Kawakami T."/>
            <person name="Noguchi S."/>
            <person name="Itoh T."/>
            <person name="Shigeta K."/>
            <person name="Senba T."/>
            <person name="Matsumura K."/>
            <person name="Nakajima Y."/>
            <person name="Mizuno T."/>
            <person name="Morinaga M."/>
            <person name="Sasaki M."/>
            <person name="Togashi T."/>
            <person name="Oyama M."/>
            <person name="Hata H."/>
            <person name="Watanabe M."/>
            <person name="Komatsu T."/>
            <person name="Mizushima-Sugano J."/>
            <person name="Satoh T."/>
            <person name="Shirai Y."/>
            <person name="Takahashi Y."/>
            <person name="Nakagawa K."/>
            <person name="Okumura K."/>
            <person name="Nagase T."/>
            <person name="Nomura N."/>
            <person name="Kikuchi H."/>
            <person name="Masuho Y."/>
            <person name="Yamashita R."/>
            <person name="Nakai K."/>
            <person name="Yada T."/>
            <person name="Nakamura Y."/>
            <person name="Ohara O."/>
            <person name="Isogai T."/>
            <person name="Sugano S."/>
        </authorList>
    </citation>
    <scope>NUCLEOTIDE SEQUENCE [LARGE SCALE MRNA] (ISOFORM 1)</scope>
</reference>
<reference key="5">
    <citation type="submission" date="2005-07" db="EMBL/GenBank/DDBJ databases">
        <authorList>
            <person name="Mural R.J."/>
            <person name="Istrail S."/>
            <person name="Sutton G."/>
            <person name="Florea L."/>
            <person name="Halpern A.L."/>
            <person name="Mobarry C.M."/>
            <person name="Lippert R."/>
            <person name="Walenz B."/>
            <person name="Shatkay H."/>
            <person name="Dew I."/>
            <person name="Miller J.R."/>
            <person name="Flanigan M.J."/>
            <person name="Edwards N.J."/>
            <person name="Bolanos R."/>
            <person name="Fasulo D."/>
            <person name="Halldorsson B.V."/>
            <person name="Hannenhalli S."/>
            <person name="Turner R."/>
            <person name="Yooseph S."/>
            <person name="Lu F."/>
            <person name="Nusskern D.R."/>
            <person name="Shue B.C."/>
            <person name="Zheng X.H."/>
            <person name="Zhong F."/>
            <person name="Delcher A.L."/>
            <person name="Huson D.H."/>
            <person name="Kravitz S.A."/>
            <person name="Mouchard L."/>
            <person name="Reinert K."/>
            <person name="Remington K.A."/>
            <person name="Clark A.G."/>
            <person name="Waterman M.S."/>
            <person name="Eichler E.E."/>
            <person name="Adams M.D."/>
            <person name="Hunkapiller M.W."/>
            <person name="Myers E.W."/>
            <person name="Venter J.C."/>
        </authorList>
    </citation>
    <scope>NUCLEOTIDE SEQUENCE [LARGE SCALE GENOMIC DNA]</scope>
</reference>
<reference key="6">
    <citation type="journal article" date="2004" name="Genome Res.">
        <title>The status, quality, and expansion of the NIH full-length cDNA project: the Mammalian Gene Collection (MGC).</title>
        <authorList>
            <consortium name="The MGC Project Team"/>
        </authorList>
    </citation>
    <scope>NUCLEOTIDE SEQUENCE [LARGE SCALE MRNA] (ISOFORMS 1 AND 2)</scope>
    <source>
        <tissue>Lung</tissue>
        <tissue>Prostate</tissue>
    </source>
</reference>
<reference key="7">
    <citation type="journal article" date="2012" name="Proc. Natl. Acad. Sci. U.S.A.">
        <title>N-terminal acetylome analyses and functional insights of the N-terminal acetyltransferase NatB.</title>
        <authorList>
            <person name="Van Damme P."/>
            <person name="Lasa M."/>
            <person name="Polevoda B."/>
            <person name="Gazquez C."/>
            <person name="Elosegui-Artola A."/>
            <person name="Kim D.S."/>
            <person name="De Juan-Pardo E."/>
            <person name="Demeyer K."/>
            <person name="Hole K."/>
            <person name="Larrea E."/>
            <person name="Timmerman E."/>
            <person name="Prieto J."/>
            <person name="Arnesen T."/>
            <person name="Sherman F."/>
            <person name="Gevaert K."/>
            <person name="Aldabe R."/>
        </authorList>
    </citation>
    <scope>ACETYLATION [LARGE SCALE ANALYSIS] AT MET-1</scope>
    <scope>IDENTIFICATION BY MASS SPECTROMETRY [LARGE SCALE ANALYSIS]</scope>
</reference>
<reference key="8">
    <citation type="journal article" date="2013" name="Biochim. Biophys. Acta">
        <title>Substrate specificity, plasma membrane localization, and lipid modification of the aldehyde dehydrogenase ALDH3B1.</title>
        <authorList>
            <person name="Kitamura T."/>
            <person name="Naganuma T."/>
            <person name="Abe K."/>
            <person name="Nakahara K."/>
            <person name="Ohno Y."/>
            <person name="Kihara A."/>
        </authorList>
    </citation>
    <scope>SUBCELLULAR LOCATION</scope>
    <scope>FUNCTION</scope>
    <scope>PALMITOYLATION AT CYS-463</scope>
    <scope>ISOPRENYLATION AT CYS-465</scope>
    <scope>CATALYTIC ACTIVITY</scope>
    <scope>BIOPHYSICOCHEMICAL PROPERTIES</scope>
    <scope>SUBSTRATE SPECIFICITY</scope>
</reference>
<feature type="chain" id="PRO_0000056481" description="Aldehyde dehydrogenase family 3 member B1">
    <location>
        <begin position="1"/>
        <end position="465"/>
    </location>
</feature>
<feature type="propeptide" id="PRO_0000424193" description="Removed in mature form" evidence="5">
    <location>
        <begin position="466"/>
        <end position="468"/>
    </location>
</feature>
<feature type="active site" evidence="1">
    <location>
        <position position="210"/>
    </location>
</feature>
<feature type="active site" evidence="1">
    <location>
        <position position="244"/>
    </location>
</feature>
<feature type="binding site" evidence="1">
    <location>
        <begin position="188"/>
        <end position="193"/>
    </location>
    <ligand>
        <name>NAD(+)</name>
        <dbReference type="ChEBI" id="CHEBI:57540"/>
    </ligand>
</feature>
<feature type="modified residue" description="N-acetylmethionine" evidence="7">
    <location>
        <position position="1"/>
    </location>
</feature>
<feature type="modified residue" description="Cysteine methyl ester" evidence="5">
    <location>
        <position position="465"/>
    </location>
</feature>
<feature type="lipid moiety-binding region" description="S-palmitoyl cysteine" evidence="3">
    <location>
        <position position="463"/>
    </location>
</feature>
<feature type="lipid moiety-binding region" description="S-geranylgeranyl cysteine" evidence="3">
    <location>
        <position position="465"/>
    </location>
</feature>
<feature type="splice variant" id="VSP_014040" description="In isoform 2." evidence="4">
    <location>
        <begin position="55"/>
        <end position="91"/>
    </location>
</feature>
<name>AL3B1_HUMAN</name>
<sequence length="468" mass="51840">MDPLGDTLRRLREAFHAGRTRPAEFRAAQLQGLGRFLQENKQLLHDALAQDLHKSAFESEVSEVAISQGEVTLALRNLRAWMKDERVPKNLATQLDSAFIRKEPFGLVLIIAPWNYPLNLTLVPLVGALAAGNCVVLKPSEISKNVEKILAEVLPQYVDQSCFAVVLGGPQETGQLLEHRFDYIFFTGSPRVGKIVMTAAAKHLTPVTLELGGKNPCYVDDNCDPQTVANRVAWFRYFNAGQTCVAPDYVLCSPEMQERLLPALQSTITRFYGDDPQSSPNLGRIINQKQFQRLRALLGCGRVAIGGQSDESDRYIAPTVLVDVQEMEPVMQEEIFGPILPIVNVQSLDEAIEFINRREKPLALYAFSNSSQVVKRVLTQTSSGGFCGNDGFMHMTLASLPFGGVGASGMGRYHGKFSFDTFSHHRACLLRSPGMEKLNALRYPPQSPRRLRMLLVAMEAQGCSCTLL</sequence>
<gene>
    <name type="primary">ALDH3B1</name>
    <name type="synonym">ALDH7</name>
</gene>
<proteinExistence type="evidence at protein level"/>
<organism>
    <name type="scientific">Homo sapiens</name>
    <name type="common">Human</name>
    <dbReference type="NCBI Taxonomy" id="9606"/>
    <lineage>
        <taxon>Eukaryota</taxon>
        <taxon>Metazoa</taxon>
        <taxon>Chordata</taxon>
        <taxon>Craniata</taxon>
        <taxon>Vertebrata</taxon>
        <taxon>Euteleostomi</taxon>
        <taxon>Mammalia</taxon>
        <taxon>Eutheria</taxon>
        <taxon>Euarchontoglires</taxon>
        <taxon>Primates</taxon>
        <taxon>Haplorrhini</taxon>
        <taxon>Catarrhini</taxon>
        <taxon>Hominidae</taxon>
        <taxon>Homo</taxon>
    </lineage>
</organism>
<protein>
    <recommendedName>
        <fullName>Aldehyde dehydrogenase family 3 member B1</fullName>
        <ecNumber evidence="2">1.2.1.28</ecNumber>
        <ecNumber evidence="2 3">1.2.1.5</ecNumber>
        <ecNumber evidence="2">1.2.1.7</ecNumber>
    </recommendedName>
    <alternativeName>
        <fullName>Aldehyde dehydrogenase 7</fullName>
    </alternativeName>
    <alternativeName>
        <fullName>Long-chain fatty aldehyde dehydrogenase</fullName>
        <ecNumber evidence="3">1.2.1.48</ecNumber>
    </alternativeName>
    <alternativeName>
        <fullName>Medium-chain fatty aldehyde dehydrogenase</fullName>
    </alternativeName>
</protein>
<accession>P43353</accession>
<accession>A3FMP9</accession>
<accession>Q53XL5</accession>
<accession>Q8N515</accession>
<accession>Q96CK8</accession>
<dbReference type="EC" id="1.2.1.28" evidence="2"/>
<dbReference type="EC" id="1.2.1.5" evidence="2 3"/>
<dbReference type="EC" id="1.2.1.7" evidence="2"/>
<dbReference type="EC" id="1.2.1.48" evidence="3"/>
<dbReference type="EMBL" id="U10868">
    <property type="protein sequence ID" value="AAA83428.1"/>
    <property type="molecule type" value="mRNA"/>
</dbReference>
<dbReference type="EMBL" id="EF411198">
    <property type="protein sequence ID" value="ABN58743.1"/>
    <property type="molecule type" value="mRNA"/>
</dbReference>
<dbReference type="EMBL" id="BT009832">
    <property type="protein sequence ID" value="AAP88834.1"/>
    <property type="molecule type" value="mRNA"/>
</dbReference>
<dbReference type="EMBL" id="AK291505">
    <property type="protein sequence ID" value="BAF84194.1"/>
    <property type="molecule type" value="mRNA"/>
</dbReference>
<dbReference type="EMBL" id="CH471076">
    <property type="protein sequence ID" value="EAW74680.1"/>
    <property type="molecule type" value="Genomic_DNA"/>
</dbReference>
<dbReference type="EMBL" id="BC013584">
    <property type="protein sequence ID" value="AAH13584.1"/>
    <property type="molecule type" value="mRNA"/>
</dbReference>
<dbReference type="EMBL" id="BC014168">
    <property type="protein sequence ID" value="AAH14168.2"/>
    <property type="molecule type" value="mRNA"/>
</dbReference>
<dbReference type="EMBL" id="BC033099">
    <property type="protein sequence ID" value="AAH33099.1"/>
    <property type="molecule type" value="mRNA"/>
</dbReference>
<dbReference type="CCDS" id="CCDS73335.1">
    <molecule id="P43353-1"/>
</dbReference>
<dbReference type="CCDS" id="CCDS73336.1">
    <molecule id="P43353-2"/>
</dbReference>
<dbReference type="PIR" id="I38669">
    <property type="entry name" value="I38669"/>
</dbReference>
<dbReference type="RefSeq" id="NP_000685.1">
    <molecule id="P43353-1"/>
    <property type="nucleotide sequence ID" value="NM_000694.4"/>
</dbReference>
<dbReference type="RefSeq" id="NP_001025181.1">
    <molecule id="P43353-2"/>
    <property type="nucleotide sequence ID" value="NM_001030010.3"/>
</dbReference>
<dbReference type="RefSeq" id="NP_001154945.1">
    <molecule id="P43353-1"/>
    <property type="nucleotide sequence ID" value="NM_001161473.3"/>
</dbReference>
<dbReference type="RefSeq" id="NP_001276987.1">
    <property type="nucleotide sequence ID" value="NM_001290058.1"/>
</dbReference>
<dbReference type="RefSeq" id="NP_001276988.1">
    <property type="nucleotide sequence ID" value="NM_001290059.1"/>
</dbReference>
<dbReference type="SMR" id="P43353"/>
<dbReference type="BioGRID" id="106723">
    <property type="interactions" value="152"/>
</dbReference>
<dbReference type="FunCoup" id="P43353">
    <property type="interactions" value="768"/>
</dbReference>
<dbReference type="IntAct" id="P43353">
    <property type="interactions" value="96"/>
</dbReference>
<dbReference type="MINT" id="P43353"/>
<dbReference type="STRING" id="9606.ENSP00000473990"/>
<dbReference type="ChEMBL" id="CHEMBL3542434"/>
<dbReference type="DrugBank" id="DB00157">
    <property type="generic name" value="NADH"/>
</dbReference>
<dbReference type="GlyGen" id="P43353">
    <property type="glycosylation" value="1 site, 1 O-linked glycan (1 site)"/>
</dbReference>
<dbReference type="iPTMnet" id="P43353"/>
<dbReference type="PhosphoSitePlus" id="P43353"/>
<dbReference type="SwissPalm" id="P43353"/>
<dbReference type="BioMuta" id="ALDH3B1"/>
<dbReference type="DMDM" id="1169285"/>
<dbReference type="jPOST" id="P43353"/>
<dbReference type="MassIVE" id="P43353"/>
<dbReference type="PaxDb" id="9606-ENSP00000473990"/>
<dbReference type="PeptideAtlas" id="P43353"/>
<dbReference type="ProteomicsDB" id="55614">
    <molecule id="P43353-1"/>
</dbReference>
<dbReference type="ProteomicsDB" id="55615">
    <molecule id="P43353-2"/>
</dbReference>
<dbReference type="Pumba" id="P43353"/>
<dbReference type="Antibodypedia" id="30512">
    <property type="antibodies" value="278 antibodies from 31 providers"/>
</dbReference>
<dbReference type="DNASU" id="221"/>
<dbReference type="Ensembl" id="ENST00000342456.11">
    <molecule id="P43353-1"/>
    <property type="protein sequence ID" value="ENSP00000473990.2"/>
    <property type="gene ID" value="ENSG00000006534.17"/>
</dbReference>
<dbReference type="Ensembl" id="ENST00000614849.4">
    <molecule id="P43353-1"/>
    <property type="protein sequence ID" value="ENSP00000478486.1"/>
    <property type="gene ID" value="ENSG00000006534.17"/>
</dbReference>
<dbReference type="Ensembl" id="ENST00000617288.4">
    <molecule id="P43353-2"/>
    <property type="protein sequence ID" value="ENSP00000481604.1"/>
    <property type="gene ID" value="ENSG00000006534.17"/>
</dbReference>
<dbReference type="GeneID" id="221"/>
<dbReference type="KEGG" id="hsa:221"/>
<dbReference type="MANE-Select" id="ENST00000342456.11">
    <property type="protein sequence ID" value="ENSP00000473990.2"/>
    <property type="RefSeq nucleotide sequence ID" value="NM_000694.4"/>
    <property type="RefSeq protein sequence ID" value="NP_000685.1"/>
</dbReference>
<dbReference type="UCSC" id="uc031xti.2">
    <molecule id="P43353-1"/>
    <property type="organism name" value="human"/>
</dbReference>
<dbReference type="AGR" id="HGNC:410"/>
<dbReference type="CTD" id="221"/>
<dbReference type="DisGeNET" id="221"/>
<dbReference type="GeneCards" id="ALDH3B1"/>
<dbReference type="HGNC" id="HGNC:410">
    <property type="gene designation" value="ALDH3B1"/>
</dbReference>
<dbReference type="HPA" id="ENSG00000006534">
    <property type="expression patterns" value="Tissue enhanced (bone)"/>
</dbReference>
<dbReference type="MIM" id="600466">
    <property type="type" value="gene"/>
</dbReference>
<dbReference type="neXtProt" id="NX_P43353"/>
<dbReference type="OpenTargets" id="ENSG00000006534"/>
<dbReference type="PharmGKB" id="PA24699"/>
<dbReference type="VEuPathDB" id="HostDB:ENSG00000006534"/>
<dbReference type="eggNOG" id="KOG2456">
    <property type="taxonomic scope" value="Eukaryota"/>
</dbReference>
<dbReference type="GeneTree" id="ENSGT00940000162915"/>
<dbReference type="HOGENOM" id="CLU_005391_3_1_1"/>
<dbReference type="InParanoid" id="P43353"/>
<dbReference type="OMA" id="MKDQKVP"/>
<dbReference type="OrthoDB" id="440325at2759"/>
<dbReference type="PAN-GO" id="P43353">
    <property type="GO annotations" value="3 GO annotations based on evolutionary models"/>
</dbReference>
<dbReference type="PhylomeDB" id="P43353"/>
<dbReference type="BRENDA" id="1.2.1.5">
    <property type="organism ID" value="2681"/>
</dbReference>
<dbReference type="PathwayCommons" id="P43353"/>
<dbReference type="Reactome" id="R-HSA-6798695">
    <property type="pathway name" value="Neutrophil degranulation"/>
</dbReference>
<dbReference type="Reactome" id="R-HSA-9845614">
    <property type="pathway name" value="Sphingolipid catabolism"/>
</dbReference>
<dbReference type="SignaLink" id="P43353"/>
<dbReference type="SIGNOR" id="P43353"/>
<dbReference type="UniPathway" id="UPA00780">
    <property type="reaction ID" value="UER00768"/>
</dbReference>
<dbReference type="BioGRID-ORCS" id="221">
    <property type="hits" value="7 hits in 322 CRISPR screens"/>
</dbReference>
<dbReference type="ChiTaRS" id="ALDH3B1">
    <property type="organism name" value="human"/>
</dbReference>
<dbReference type="GeneWiki" id="ALDH3B1"/>
<dbReference type="GenomeRNAi" id="221"/>
<dbReference type="Pharos" id="P43353">
    <property type="development level" value="Tbio"/>
</dbReference>
<dbReference type="PRO" id="PR:P43353"/>
<dbReference type="Proteomes" id="UP000005640">
    <property type="component" value="Chromosome 11"/>
</dbReference>
<dbReference type="RNAct" id="P43353">
    <property type="molecule type" value="protein"/>
</dbReference>
<dbReference type="Bgee" id="ENSG00000006534">
    <property type="expression patterns" value="Expressed in bronchial epithelial cell and 196 other cell types or tissues"/>
</dbReference>
<dbReference type="ExpressionAtlas" id="P43353">
    <property type="expression patterns" value="baseline and differential"/>
</dbReference>
<dbReference type="GO" id="GO:0005737">
    <property type="term" value="C:cytoplasm"/>
    <property type="evidence" value="ECO:0000314"/>
    <property type="project" value="MGI"/>
</dbReference>
<dbReference type="GO" id="GO:0005829">
    <property type="term" value="C:cytosol"/>
    <property type="evidence" value="ECO:0007669"/>
    <property type="project" value="Ensembl"/>
</dbReference>
<dbReference type="GO" id="GO:0070062">
    <property type="term" value="C:extracellular exosome"/>
    <property type="evidence" value="ECO:0007005"/>
    <property type="project" value="UniProtKB"/>
</dbReference>
<dbReference type="GO" id="GO:0005886">
    <property type="term" value="C:plasma membrane"/>
    <property type="evidence" value="ECO:0000304"/>
    <property type="project" value="Reactome"/>
</dbReference>
<dbReference type="GO" id="GO:0030667">
    <property type="term" value="C:secretory granule membrane"/>
    <property type="evidence" value="ECO:0000304"/>
    <property type="project" value="Reactome"/>
</dbReference>
<dbReference type="GO" id="GO:0035579">
    <property type="term" value="C:specific granule membrane"/>
    <property type="evidence" value="ECO:0000304"/>
    <property type="project" value="Reactome"/>
</dbReference>
<dbReference type="GO" id="GO:0031982">
    <property type="term" value="C:vesicle"/>
    <property type="evidence" value="ECO:0007005"/>
    <property type="project" value="UniProtKB"/>
</dbReference>
<dbReference type="GO" id="GO:0004028">
    <property type="term" value="F:3-chloroallyl aldehyde dehydrogenase activity"/>
    <property type="evidence" value="ECO:0000318"/>
    <property type="project" value="GO_Central"/>
</dbReference>
<dbReference type="GO" id="GO:0004029">
    <property type="term" value="F:aldehyde dehydrogenase (NAD+) activity"/>
    <property type="evidence" value="ECO:0000318"/>
    <property type="project" value="GO_Central"/>
</dbReference>
<dbReference type="GO" id="GO:0004030">
    <property type="term" value="F:aldehyde dehydrogenase [NAD(P)+] activity"/>
    <property type="evidence" value="ECO:0000314"/>
    <property type="project" value="MGI"/>
</dbReference>
<dbReference type="GO" id="GO:0018479">
    <property type="term" value="F:benzaldehyde dehydrogenase (NAD+) activity"/>
    <property type="evidence" value="ECO:0007669"/>
    <property type="project" value="UniProtKB-EC"/>
</dbReference>
<dbReference type="GO" id="GO:0018477">
    <property type="term" value="F:benzaldehyde dehydrogenase (NADP+) activity"/>
    <property type="evidence" value="ECO:0007669"/>
    <property type="project" value="UniProtKB-EC"/>
</dbReference>
<dbReference type="GO" id="GO:0050061">
    <property type="term" value="F:long-chain fatty aldehyde dehydrogenase (NAD+) activity"/>
    <property type="evidence" value="ECO:0007669"/>
    <property type="project" value="RHEA"/>
</dbReference>
<dbReference type="GO" id="GO:0052814">
    <property type="term" value="F:medium-chain fatty aldehyde dehydrogenase (NAD+) activity"/>
    <property type="evidence" value="ECO:0007669"/>
    <property type="project" value="RHEA"/>
</dbReference>
<dbReference type="GO" id="GO:0006066">
    <property type="term" value="P:alcohol metabolic process"/>
    <property type="evidence" value="ECO:0000304"/>
    <property type="project" value="ProtInc"/>
</dbReference>
<dbReference type="GO" id="GO:0046185">
    <property type="term" value="P:aldehyde catabolic process"/>
    <property type="evidence" value="ECO:0000314"/>
    <property type="project" value="MGI"/>
</dbReference>
<dbReference type="GO" id="GO:0006081">
    <property type="term" value="P:aldehyde metabolic process"/>
    <property type="evidence" value="ECO:0000318"/>
    <property type="project" value="GO_Central"/>
</dbReference>
<dbReference type="GO" id="GO:0034599">
    <property type="term" value="P:cellular response to oxidative stress"/>
    <property type="evidence" value="ECO:0000314"/>
    <property type="project" value="MGI"/>
</dbReference>
<dbReference type="GO" id="GO:0006068">
    <property type="term" value="P:ethanol catabolic process"/>
    <property type="evidence" value="ECO:0007669"/>
    <property type="project" value="UniProtKB-UniPathway"/>
</dbReference>
<dbReference type="GO" id="GO:0006629">
    <property type="term" value="P:lipid metabolic process"/>
    <property type="evidence" value="ECO:0000304"/>
    <property type="project" value="ProtInc"/>
</dbReference>
<dbReference type="GO" id="GO:0006979">
    <property type="term" value="P:response to oxidative stress"/>
    <property type="evidence" value="ECO:0000314"/>
    <property type="project" value="MGI"/>
</dbReference>
<dbReference type="GO" id="GO:0030149">
    <property type="term" value="P:sphingolipid catabolic process"/>
    <property type="evidence" value="ECO:0000304"/>
    <property type="project" value="Reactome"/>
</dbReference>
<dbReference type="CDD" id="cd07132">
    <property type="entry name" value="ALDH_F3AB"/>
    <property type="match status" value="1"/>
</dbReference>
<dbReference type="FunFam" id="3.40.309.10:FF:000003">
    <property type="entry name" value="Aldehyde dehydrogenase"/>
    <property type="match status" value="1"/>
</dbReference>
<dbReference type="FunFam" id="3.40.605.10:FF:000004">
    <property type="entry name" value="Aldehyde dehydrogenase"/>
    <property type="match status" value="1"/>
</dbReference>
<dbReference type="Gene3D" id="3.40.605.10">
    <property type="entry name" value="Aldehyde Dehydrogenase, Chain A, domain 1"/>
    <property type="match status" value="1"/>
</dbReference>
<dbReference type="Gene3D" id="3.40.309.10">
    <property type="entry name" value="Aldehyde Dehydrogenase, Chain A, domain 2"/>
    <property type="match status" value="1"/>
</dbReference>
<dbReference type="InterPro" id="IPR016161">
    <property type="entry name" value="Ald_DH/histidinol_DH"/>
</dbReference>
<dbReference type="InterPro" id="IPR016163">
    <property type="entry name" value="Ald_DH_C"/>
</dbReference>
<dbReference type="InterPro" id="IPR016160">
    <property type="entry name" value="Ald_DH_CS_CYS"/>
</dbReference>
<dbReference type="InterPro" id="IPR029510">
    <property type="entry name" value="Ald_DH_CS_GLU"/>
</dbReference>
<dbReference type="InterPro" id="IPR016162">
    <property type="entry name" value="Ald_DH_N"/>
</dbReference>
<dbReference type="InterPro" id="IPR015590">
    <property type="entry name" value="Aldehyde_DH_dom"/>
</dbReference>
<dbReference type="InterPro" id="IPR012394">
    <property type="entry name" value="Aldehyde_DH_NAD(P)"/>
</dbReference>
<dbReference type="PANTHER" id="PTHR43570">
    <property type="entry name" value="ALDEHYDE DEHYDROGENASE"/>
    <property type="match status" value="1"/>
</dbReference>
<dbReference type="PANTHER" id="PTHR43570:SF2">
    <property type="entry name" value="ALDEHYDE DEHYDROGENASE FAMILY 3 MEMBER B1"/>
    <property type="match status" value="1"/>
</dbReference>
<dbReference type="Pfam" id="PF00171">
    <property type="entry name" value="Aldedh"/>
    <property type="match status" value="1"/>
</dbReference>
<dbReference type="PIRSF" id="PIRSF036492">
    <property type="entry name" value="ALDH"/>
    <property type="match status" value="1"/>
</dbReference>
<dbReference type="SUPFAM" id="SSF53720">
    <property type="entry name" value="ALDH-like"/>
    <property type="match status" value="1"/>
</dbReference>
<dbReference type="PROSITE" id="PS00070">
    <property type="entry name" value="ALDEHYDE_DEHYDR_CYS"/>
    <property type="match status" value="1"/>
</dbReference>
<dbReference type="PROSITE" id="PS00687">
    <property type="entry name" value="ALDEHYDE_DEHYDR_GLU"/>
    <property type="match status" value="1"/>
</dbReference>